<accession>Q1WUN0</accession>
<name>RL35_LIGS1</name>
<gene>
    <name evidence="1" type="primary">rpmI</name>
    <name type="ordered locus">LSL_0496</name>
</gene>
<evidence type="ECO:0000255" key="1">
    <source>
        <dbReference type="HAMAP-Rule" id="MF_00514"/>
    </source>
</evidence>
<evidence type="ECO:0000256" key="2">
    <source>
        <dbReference type="SAM" id="MobiDB-lite"/>
    </source>
</evidence>
<evidence type="ECO:0000305" key="3"/>
<comment type="similarity">
    <text evidence="1">Belongs to the bacterial ribosomal protein bL35 family.</text>
</comment>
<proteinExistence type="inferred from homology"/>
<protein>
    <recommendedName>
        <fullName evidence="1">Large ribosomal subunit protein bL35</fullName>
    </recommendedName>
    <alternativeName>
        <fullName evidence="3">50S ribosomal protein L35</fullName>
    </alternativeName>
</protein>
<sequence length="66" mass="7717">MPKQKTHRASAKRFKRTGNGGLKRSNAYTSHRFHGKTKKQRRQLRKASMVSASDMKRIKQMLSQMK</sequence>
<organism>
    <name type="scientific">Ligilactobacillus salivarius (strain UCC118)</name>
    <name type="common">Lactobacillus salivarius</name>
    <dbReference type="NCBI Taxonomy" id="362948"/>
    <lineage>
        <taxon>Bacteria</taxon>
        <taxon>Bacillati</taxon>
        <taxon>Bacillota</taxon>
        <taxon>Bacilli</taxon>
        <taxon>Lactobacillales</taxon>
        <taxon>Lactobacillaceae</taxon>
        <taxon>Ligilactobacillus</taxon>
    </lineage>
</organism>
<dbReference type="EMBL" id="CP000233">
    <property type="protein sequence ID" value="ABD99305.1"/>
    <property type="molecule type" value="Genomic_DNA"/>
</dbReference>
<dbReference type="RefSeq" id="WP_003699793.1">
    <property type="nucleotide sequence ID" value="NC_007929.1"/>
</dbReference>
<dbReference type="RefSeq" id="YP_535388.1">
    <property type="nucleotide sequence ID" value="NC_007929.1"/>
</dbReference>
<dbReference type="SMR" id="Q1WUN0"/>
<dbReference type="STRING" id="362948.LSL_0496"/>
<dbReference type="GeneID" id="89465282"/>
<dbReference type="KEGG" id="lsl:LSL_0496"/>
<dbReference type="PATRIC" id="fig|362948.14.peg.572"/>
<dbReference type="HOGENOM" id="CLU_169643_3_1_9"/>
<dbReference type="OrthoDB" id="47476at2"/>
<dbReference type="Proteomes" id="UP000006559">
    <property type="component" value="Chromosome"/>
</dbReference>
<dbReference type="GO" id="GO:0022625">
    <property type="term" value="C:cytosolic large ribosomal subunit"/>
    <property type="evidence" value="ECO:0007669"/>
    <property type="project" value="TreeGrafter"/>
</dbReference>
<dbReference type="GO" id="GO:0003735">
    <property type="term" value="F:structural constituent of ribosome"/>
    <property type="evidence" value="ECO:0007669"/>
    <property type="project" value="InterPro"/>
</dbReference>
<dbReference type="GO" id="GO:0006412">
    <property type="term" value="P:translation"/>
    <property type="evidence" value="ECO:0007669"/>
    <property type="project" value="UniProtKB-UniRule"/>
</dbReference>
<dbReference type="FunFam" id="4.10.410.60:FF:000001">
    <property type="entry name" value="50S ribosomal protein L35"/>
    <property type="match status" value="1"/>
</dbReference>
<dbReference type="Gene3D" id="4.10.410.60">
    <property type="match status" value="1"/>
</dbReference>
<dbReference type="HAMAP" id="MF_00514">
    <property type="entry name" value="Ribosomal_bL35"/>
    <property type="match status" value="1"/>
</dbReference>
<dbReference type="InterPro" id="IPR001706">
    <property type="entry name" value="Ribosomal_bL35"/>
</dbReference>
<dbReference type="InterPro" id="IPR021137">
    <property type="entry name" value="Ribosomal_bL35-like"/>
</dbReference>
<dbReference type="InterPro" id="IPR018265">
    <property type="entry name" value="Ribosomal_bL35_CS"/>
</dbReference>
<dbReference type="InterPro" id="IPR037229">
    <property type="entry name" value="Ribosomal_bL35_sf"/>
</dbReference>
<dbReference type="NCBIfam" id="TIGR00001">
    <property type="entry name" value="rpmI_bact"/>
    <property type="match status" value="1"/>
</dbReference>
<dbReference type="PANTHER" id="PTHR33343">
    <property type="entry name" value="54S RIBOSOMAL PROTEIN BL35M"/>
    <property type="match status" value="1"/>
</dbReference>
<dbReference type="PANTHER" id="PTHR33343:SF1">
    <property type="entry name" value="LARGE RIBOSOMAL SUBUNIT PROTEIN BL35M"/>
    <property type="match status" value="1"/>
</dbReference>
<dbReference type="Pfam" id="PF01632">
    <property type="entry name" value="Ribosomal_L35p"/>
    <property type="match status" value="1"/>
</dbReference>
<dbReference type="PRINTS" id="PR00064">
    <property type="entry name" value="RIBOSOMALL35"/>
</dbReference>
<dbReference type="SUPFAM" id="SSF143034">
    <property type="entry name" value="L35p-like"/>
    <property type="match status" value="1"/>
</dbReference>
<dbReference type="PROSITE" id="PS00936">
    <property type="entry name" value="RIBOSOMAL_L35"/>
    <property type="match status" value="1"/>
</dbReference>
<feature type="chain" id="PRO_0000258694" description="Large ribosomal subunit protein bL35">
    <location>
        <begin position="1"/>
        <end position="66"/>
    </location>
</feature>
<feature type="region of interest" description="Disordered" evidence="2">
    <location>
        <begin position="1"/>
        <end position="52"/>
    </location>
</feature>
<feature type="compositionally biased region" description="Basic residues" evidence="2">
    <location>
        <begin position="1"/>
        <end position="16"/>
    </location>
</feature>
<feature type="compositionally biased region" description="Basic residues" evidence="2">
    <location>
        <begin position="31"/>
        <end position="45"/>
    </location>
</feature>
<keyword id="KW-1185">Reference proteome</keyword>
<keyword id="KW-0687">Ribonucleoprotein</keyword>
<keyword id="KW-0689">Ribosomal protein</keyword>
<reference key="1">
    <citation type="journal article" date="2006" name="Proc. Natl. Acad. Sci. U.S.A.">
        <title>Multireplicon genome architecture of Lactobacillus salivarius.</title>
        <authorList>
            <person name="Claesson M.J."/>
            <person name="Li Y."/>
            <person name="Leahy S."/>
            <person name="Canchaya C."/>
            <person name="van Pijkeren J.P."/>
            <person name="Cerdeno-Tarraga A.M."/>
            <person name="Parkhill J."/>
            <person name="Flynn S."/>
            <person name="O'Sullivan G.C."/>
            <person name="Collins J.K."/>
            <person name="Higgins D."/>
            <person name="Shanahan F."/>
            <person name="Fitzgerald G.F."/>
            <person name="van Sinderen D."/>
            <person name="O'Toole P.W."/>
        </authorList>
    </citation>
    <scope>NUCLEOTIDE SEQUENCE [LARGE SCALE GENOMIC DNA]</scope>
    <source>
        <strain>UCC118</strain>
    </source>
</reference>